<organism>
    <name type="scientific">Hirudo medicinalis</name>
    <name type="common">Medicinal leech</name>
    <dbReference type="NCBI Taxonomy" id="6421"/>
    <lineage>
        <taxon>Eukaryota</taxon>
        <taxon>Metazoa</taxon>
        <taxon>Spiralia</taxon>
        <taxon>Lophotrochozoa</taxon>
        <taxon>Annelida</taxon>
        <taxon>Clitellata</taxon>
        <taxon>Hirudinea</taxon>
        <taxon>Hirudinida</taxon>
        <taxon>Hirudiniformes</taxon>
        <taxon>Hirudinidae</taxon>
        <taxon>Hirudo</taxon>
    </lineage>
</organism>
<gene>
    <name type="primary">LOX2</name>
</gene>
<keyword id="KW-0217">Developmental protein</keyword>
<keyword id="KW-0238">DNA-binding</keyword>
<keyword id="KW-0371">Homeobox</keyword>
<keyword id="KW-0539">Nucleus</keyword>
<dbReference type="EMBL" id="X17566">
    <property type="protein sequence ID" value="CAA35595.1"/>
    <property type="molecule type" value="Genomic_DNA"/>
</dbReference>
<dbReference type="PIR" id="S06493">
    <property type="entry name" value="S06493"/>
</dbReference>
<dbReference type="SMR" id="P21523"/>
<dbReference type="GO" id="GO:0005634">
    <property type="term" value="C:nucleus"/>
    <property type="evidence" value="ECO:0007669"/>
    <property type="project" value="UniProtKB-SubCell"/>
</dbReference>
<dbReference type="GO" id="GO:0000981">
    <property type="term" value="F:DNA-binding transcription factor activity, RNA polymerase II-specific"/>
    <property type="evidence" value="ECO:0007669"/>
    <property type="project" value="InterPro"/>
</dbReference>
<dbReference type="GO" id="GO:0000978">
    <property type="term" value="F:RNA polymerase II cis-regulatory region sequence-specific DNA binding"/>
    <property type="evidence" value="ECO:0007669"/>
    <property type="project" value="TreeGrafter"/>
</dbReference>
<dbReference type="GO" id="GO:0009952">
    <property type="term" value="P:anterior/posterior pattern specification"/>
    <property type="evidence" value="ECO:0007669"/>
    <property type="project" value="TreeGrafter"/>
</dbReference>
<dbReference type="CDD" id="cd00086">
    <property type="entry name" value="homeodomain"/>
    <property type="match status" value="1"/>
</dbReference>
<dbReference type="Gene3D" id="1.10.10.60">
    <property type="entry name" value="Homeodomain-like"/>
    <property type="match status" value="1"/>
</dbReference>
<dbReference type="InterPro" id="IPR050296">
    <property type="entry name" value="Antp_homeobox"/>
</dbReference>
<dbReference type="InterPro" id="IPR001356">
    <property type="entry name" value="HD"/>
</dbReference>
<dbReference type="InterPro" id="IPR020479">
    <property type="entry name" value="HD_metazoa"/>
</dbReference>
<dbReference type="InterPro" id="IPR017970">
    <property type="entry name" value="Homeobox_CS"/>
</dbReference>
<dbReference type="InterPro" id="IPR009057">
    <property type="entry name" value="Homeodomain-like_sf"/>
</dbReference>
<dbReference type="PANTHER" id="PTHR45659:SF4">
    <property type="entry name" value="HOMEOBOX PROTEIN ABDOMINAL-A"/>
    <property type="match status" value="1"/>
</dbReference>
<dbReference type="PANTHER" id="PTHR45659">
    <property type="entry name" value="HOMEOBOX PROTEIN HOX"/>
    <property type="match status" value="1"/>
</dbReference>
<dbReference type="Pfam" id="PF00046">
    <property type="entry name" value="Homeodomain"/>
    <property type="match status" value="1"/>
</dbReference>
<dbReference type="PRINTS" id="PR00024">
    <property type="entry name" value="HOMEOBOX"/>
</dbReference>
<dbReference type="SMART" id="SM00389">
    <property type="entry name" value="HOX"/>
    <property type="match status" value="1"/>
</dbReference>
<dbReference type="SUPFAM" id="SSF46689">
    <property type="entry name" value="Homeodomain-like"/>
    <property type="match status" value="1"/>
</dbReference>
<dbReference type="PROSITE" id="PS00027">
    <property type="entry name" value="HOMEOBOX_1"/>
    <property type="match status" value="1"/>
</dbReference>
<dbReference type="PROSITE" id="PS50071">
    <property type="entry name" value="HOMEOBOX_2"/>
    <property type="match status" value="1"/>
</dbReference>
<comment type="function">
    <text>Sequence-specific transcription factor which is part of a developmental regulatory system that provides cells with specific positional identities on the anterior-posterior axis.</text>
</comment>
<comment type="subcellular location">
    <subcellularLocation>
        <location evidence="3">Nucleus</location>
    </subcellularLocation>
</comment>
<comment type="developmental stage">
    <text>Largest accumulation of transcripts is seen in the posterior two-thirds of the developing leech central nervous system in 7-14 days embryos.</text>
</comment>
<comment type="similarity">
    <text evidence="3">Belongs to the Antp homeobox family.</text>
</comment>
<sequence>PNSNQRRRGRQTYTRYQTLELEKEFKFNRYLTRRRRIELSHTLYLTERQIKIWFQNRRMKEKKEVQAIRELNEIEKTKLGGFLGSARSPSSTTSASCHGTGSSLSPPLMEMGGHSSAE</sequence>
<protein>
    <recommendedName>
        <fullName>Homeobox protein LOX2</fullName>
    </recommendedName>
</protein>
<feature type="chain" id="PRO_0000200257" description="Homeobox protein LOX2">
    <location>
        <begin position="1" status="less than"/>
        <end position="118"/>
    </location>
</feature>
<feature type="DNA-binding region" description="Homeobox" evidence="1">
    <location>
        <begin position="6"/>
        <end position="65"/>
    </location>
</feature>
<feature type="region of interest" description="Disordered" evidence="2">
    <location>
        <begin position="81"/>
        <end position="118"/>
    </location>
</feature>
<feature type="compositionally biased region" description="Low complexity" evidence="2">
    <location>
        <begin position="85"/>
        <end position="96"/>
    </location>
</feature>
<feature type="non-terminal residue">
    <location>
        <position position="1"/>
    </location>
</feature>
<name>HLOX2_HIRME</name>
<reference key="1">
    <citation type="journal article" date="1989" name="Nature">
        <title>Characterization of a homologue of bithorax-complex genes in the leech Hirudo medicinalis.</title>
        <authorList>
            <person name="Wysocka-Diller J.W."/>
            <person name="Aisemberg G.O."/>
            <person name="Baumgarten M."/>
            <person name="Levine M."/>
            <person name="Macagno E.R."/>
        </authorList>
    </citation>
    <scope>NUCLEOTIDE SEQUENCE [GENOMIC DNA]</scope>
</reference>
<proteinExistence type="evidence at transcript level"/>
<accession>P21523</accession>
<evidence type="ECO:0000255" key="1">
    <source>
        <dbReference type="PROSITE-ProRule" id="PRU00108"/>
    </source>
</evidence>
<evidence type="ECO:0000256" key="2">
    <source>
        <dbReference type="SAM" id="MobiDB-lite"/>
    </source>
</evidence>
<evidence type="ECO:0000305" key="3"/>